<accession>A2RF77</accession>
<feature type="chain" id="PRO_0000292752" description="UPF0342 protein SpyM51181">
    <location>
        <begin position="1"/>
        <end position="113"/>
    </location>
</feature>
<name>Y1181_STRPG</name>
<evidence type="ECO:0000255" key="1">
    <source>
        <dbReference type="HAMAP-Rule" id="MF_01526"/>
    </source>
</evidence>
<gene>
    <name type="ordered locus">SpyM51181</name>
</gene>
<reference key="1">
    <citation type="journal article" date="2007" name="J. Bacteriol.">
        <title>Complete genome of acute rheumatic fever-associated serotype M5 Streptococcus pyogenes strain Manfredo.</title>
        <authorList>
            <person name="Holden M.T.G."/>
            <person name="Scott A."/>
            <person name="Cherevach I."/>
            <person name="Chillingworth T."/>
            <person name="Churcher C."/>
            <person name="Cronin A."/>
            <person name="Dowd L."/>
            <person name="Feltwell T."/>
            <person name="Hamlin N."/>
            <person name="Holroyd S."/>
            <person name="Jagels K."/>
            <person name="Moule S."/>
            <person name="Mungall K."/>
            <person name="Quail M.A."/>
            <person name="Price C."/>
            <person name="Rabbinowitsch E."/>
            <person name="Sharp S."/>
            <person name="Skelton J."/>
            <person name="Whitehead S."/>
            <person name="Barrell B.G."/>
            <person name="Kehoe M."/>
            <person name="Parkhill J."/>
        </authorList>
    </citation>
    <scope>NUCLEOTIDE SEQUENCE [LARGE SCALE GENOMIC DNA]</scope>
    <source>
        <strain>Manfredo</strain>
    </source>
</reference>
<comment type="similarity">
    <text evidence="1">Belongs to the UPF0342 family.</text>
</comment>
<organism>
    <name type="scientific">Streptococcus pyogenes serotype M5 (strain Manfredo)</name>
    <dbReference type="NCBI Taxonomy" id="160491"/>
    <lineage>
        <taxon>Bacteria</taxon>
        <taxon>Bacillati</taxon>
        <taxon>Bacillota</taxon>
        <taxon>Bacilli</taxon>
        <taxon>Lactobacillales</taxon>
        <taxon>Streptococcaceae</taxon>
        <taxon>Streptococcus</taxon>
    </lineage>
</organism>
<sequence>MSQEIYDYANQLERAVRALPEYQKVLEVKEAIQADASASQLFDEFVAMQEKIQGMMQSGQMPTAEEQTSIQELSQKIEANDQLKAYFEAQQALSVYMSDIERIVFAPLKDLVK</sequence>
<dbReference type="EMBL" id="AM295007">
    <property type="protein sequence ID" value="CAM30506.1"/>
    <property type="molecule type" value="Genomic_DNA"/>
</dbReference>
<dbReference type="RefSeq" id="WP_002985134.1">
    <property type="nucleotide sequence ID" value="NC_009332.1"/>
</dbReference>
<dbReference type="SMR" id="A2RF77"/>
<dbReference type="KEGG" id="spf:SpyM51181"/>
<dbReference type="HOGENOM" id="CLU_140243_2_0_9"/>
<dbReference type="Gene3D" id="1.20.1500.10">
    <property type="entry name" value="YheA/YmcA-like"/>
    <property type="match status" value="1"/>
</dbReference>
<dbReference type="HAMAP" id="MF_01526">
    <property type="entry name" value="UPF0342"/>
    <property type="match status" value="1"/>
</dbReference>
<dbReference type="InterPro" id="IPR010368">
    <property type="entry name" value="Com_YlbF"/>
</dbReference>
<dbReference type="InterPro" id="IPR023378">
    <property type="entry name" value="YheA/YmcA-like_dom_sf"/>
</dbReference>
<dbReference type="NCBIfam" id="NF010209">
    <property type="entry name" value="PRK13676.1-1"/>
    <property type="match status" value="1"/>
</dbReference>
<dbReference type="Pfam" id="PF06133">
    <property type="entry name" value="Com_YlbF"/>
    <property type="match status" value="1"/>
</dbReference>
<dbReference type="SUPFAM" id="SSF158622">
    <property type="entry name" value="YheA/YmcA-like"/>
    <property type="match status" value="1"/>
</dbReference>
<proteinExistence type="inferred from homology"/>
<protein>
    <recommendedName>
        <fullName evidence="1">UPF0342 protein SpyM51181</fullName>
    </recommendedName>
</protein>